<name>DTML_BURP1</name>
<accession>Q3JLY2</accession>
<comment type="cofactor">
    <cofactor evidence="3">
        <name>Zn(2+)</name>
        <dbReference type="ChEBI" id="CHEBI:29105"/>
    </cofactor>
    <text evidence="3">Binds 1 zinc ion per subunit.</text>
</comment>
<comment type="similarity">
    <text evidence="3">Belongs to the dictomallein family.</text>
</comment>
<comment type="sequence caution" evidence="3">
    <conflict type="erroneous initiation">
        <sequence resource="EMBL-CDS" id="ABA52085"/>
    </conflict>
</comment>
<proteinExistence type="inferred from homology"/>
<gene>
    <name type="primary">dtmL</name>
    <name type="ordered locus">BURPS1710b_A0262</name>
</gene>
<sequence>MGNGERPPARRPDSSGSPPPAADAPAASNHPFSSHDTKHMTSRRLASRTAVAASLSALMLAACGGDDSANAPTAGGAAPLTPAVASPAGPTGSTPGSTPGATTAPAPSSTSAGQLSVDKMAFAQTHVVPSGGLSWTLPNASASLRPISRRDALVLVAIGQADAVQPVLEAWKDGAKLGALALSPPSALPPTESGGRAYANDRWSAVVPAAWMVPGVSFSVSASNYTSSVAQAPVFGTDADVQLTILPFYLFGADDTNSPPLSTTQAPDAATQQEIFAKWPTAELKVRTHPAGRFSLATVVVGPRADRTGAAQPAYPVTALDQQKDGYGVMSAMLTLITNMRTANGDGPLNNQYYAPLIALNSNGQFANLGGGLGGVGSGAAVGDHRYTGIFIHEQGHAFGLNHAGDEYAKGAYPYAGGSLSGSVWGYDPNHREFLDVLVPTTASSYAKCASSHQLDAQGRCYKQDPMQGGAGDQSSGYKFATFSDYNTGRMQAWIASRVLADPASSTGYSKWDSAAQARAPYTPTTDNNGLYGVNQNLPVQAGVPVHTIVVSFSKAGSAGASYIYPPFSYTGNLIATFDPTSAADRQAITVDKGTYPWYCKGTGCDYTLRVTYADGSRTYRVLQGGFRAWWTPTVDDANATNPLSGSSFRVWAINVPGDKRIGKIELLDTPMVWNGMPANPTVLLSR</sequence>
<dbReference type="EC" id="3.4.24.-"/>
<dbReference type="EMBL" id="CP000125">
    <property type="protein sequence ID" value="ABA52085.1"/>
    <property type="status" value="ALT_INIT"/>
    <property type="molecule type" value="Genomic_DNA"/>
</dbReference>
<dbReference type="RefSeq" id="WP_004547545.1">
    <property type="nucleotide sequence ID" value="NC_007435.1"/>
</dbReference>
<dbReference type="SMR" id="Q3JLY2"/>
<dbReference type="EnsemblBacteria" id="ABA52085">
    <property type="protein sequence ID" value="ABA52085"/>
    <property type="gene ID" value="BURPS1710b_A0262"/>
</dbReference>
<dbReference type="KEGG" id="bpm:BURPS1710b_A0262"/>
<dbReference type="HOGENOM" id="CLU_451780_0_0_4"/>
<dbReference type="Proteomes" id="UP000002700">
    <property type="component" value="Chromosome II"/>
</dbReference>
<dbReference type="GO" id="GO:0046872">
    <property type="term" value="F:metal ion binding"/>
    <property type="evidence" value="ECO:0007669"/>
    <property type="project" value="UniProtKB-KW"/>
</dbReference>
<dbReference type="GO" id="GO:0004222">
    <property type="term" value="F:metalloendopeptidase activity"/>
    <property type="evidence" value="ECO:0007669"/>
    <property type="project" value="InterPro"/>
</dbReference>
<dbReference type="GO" id="GO:0006508">
    <property type="term" value="P:proteolysis"/>
    <property type="evidence" value="ECO:0007669"/>
    <property type="project" value="UniProtKB-KW"/>
</dbReference>
<dbReference type="InterPro" id="IPR051256">
    <property type="entry name" value="Dictomallein"/>
</dbReference>
<dbReference type="InterPro" id="IPR019503">
    <property type="entry name" value="Peptidase_M66_dom"/>
</dbReference>
<dbReference type="PANTHER" id="PTHR39540">
    <property type="match status" value="1"/>
</dbReference>
<dbReference type="PANTHER" id="PTHR39540:SF1">
    <property type="entry name" value="DICTOMALLEIN-1-RELATED"/>
    <property type="match status" value="1"/>
</dbReference>
<dbReference type="Pfam" id="PF10462">
    <property type="entry name" value="Peptidase_M66"/>
    <property type="match status" value="1"/>
</dbReference>
<dbReference type="SUPFAM" id="SSF55486">
    <property type="entry name" value="Metalloproteases ('zincins'), catalytic domain"/>
    <property type="match status" value="1"/>
</dbReference>
<dbReference type="PROSITE" id="PS51694">
    <property type="entry name" value="PEPTIDASE_M66"/>
    <property type="match status" value="1"/>
</dbReference>
<evidence type="ECO:0000250" key="1"/>
<evidence type="ECO:0000256" key="2">
    <source>
        <dbReference type="SAM" id="MobiDB-lite"/>
    </source>
</evidence>
<evidence type="ECO:0000305" key="3"/>
<keyword id="KW-0378">Hydrolase</keyword>
<keyword id="KW-0479">Metal-binding</keyword>
<keyword id="KW-0482">Metalloprotease</keyword>
<keyword id="KW-0645">Protease</keyword>
<keyword id="KW-0862">Zinc</keyword>
<feature type="chain" id="PRO_0000322657" description="Dictomallein">
    <location>
        <begin position="1"/>
        <end position="687"/>
    </location>
</feature>
<feature type="domain" description="Peptidase M66">
    <location>
        <begin position="233"/>
        <end position="501"/>
    </location>
</feature>
<feature type="region of interest" description="Disordered" evidence="2">
    <location>
        <begin position="1"/>
        <end position="45"/>
    </location>
</feature>
<feature type="region of interest" description="Disordered" evidence="2">
    <location>
        <begin position="73"/>
        <end position="112"/>
    </location>
</feature>
<feature type="active site" evidence="1">
    <location>
        <position position="394"/>
    </location>
</feature>
<feature type="binding site" evidence="1">
    <location>
        <position position="393"/>
    </location>
    <ligand>
        <name>Zn(2+)</name>
        <dbReference type="ChEBI" id="CHEBI:29105"/>
        <note>catalytic</note>
    </ligand>
</feature>
<feature type="binding site" evidence="1">
    <location>
        <position position="397"/>
    </location>
    <ligand>
        <name>Zn(2+)</name>
        <dbReference type="ChEBI" id="CHEBI:29105"/>
        <note>catalytic</note>
    </ligand>
</feature>
<feature type="binding site" evidence="1">
    <location>
        <position position="403"/>
    </location>
    <ligand>
        <name>Zn(2+)</name>
        <dbReference type="ChEBI" id="CHEBI:29105"/>
        <note>catalytic</note>
    </ligand>
</feature>
<organism>
    <name type="scientific">Burkholderia pseudomallei (strain 1710b)</name>
    <dbReference type="NCBI Taxonomy" id="320372"/>
    <lineage>
        <taxon>Bacteria</taxon>
        <taxon>Pseudomonadati</taxon>
        <taxon>Pseudomonadota</taxon>
        <taxon>Betaproteobacteria</taxon>
        <taxon>Burkholderiales</taxon>
        <taxon>Burkholderiaceae</taxon>
        <taxon>Burkholderia</taxon>
        <taxon>pseudomallei group</taxon>
    </lineage>
</organism>
<protein>
    <recommendedName>
        <fullName>Dictomallein</fullName>
        <ecNumber>3.4.24.-</ecNumber>
    </recommendedName>
</protein>
<reference key="1">
    <citation type="journal article" date="2010" name="Genome Biol. Evol.">
        <title>Continuing evolution of Burkholderia mallei through genome reduction and large-scale rearrangements.</title>
        <authorList>
            <person name="Losada L."/>
            <person name="Ronning C.M."/>
            <person name="DeShazer D."/>
            <person name="Woods D."/>
            <person name="Fedorova N."/>
            <person name="Kim H.S."/>
            <person name="Shabalina S.A."/>
            <person name="Pearson T.R."/>
            <person name="Brinkac L."/>
            <person name="Tan P."/>
            <person name="Nandi T."/>
            <person name="Crabtree J."/>
            <person name="Badger J."/>
            <person name="Beckstrom-Sternberg S."/>
            <person name="Saqib M."/>
            <person name="Schutzer S.E."/>
            <person name="Keim P."/>
            <person name="Nierman W.C."/>
        </authorList>
    </citation>
    <scope>NUCLEOTIDE SEQUENCE [LARGE SCALE GENOMIC DNA]</scope>
    <source>
        <strain>1710b</strain>
    </source>
</reference>